<gene>
    <name evidence="5" type="primary">Hsd17b14</name>
    <name type="synonym">Dhrs10</name>
    <name type="synonym">retSDR3</name>
</gene>
<sequence>MAAVTRYSGKVVVVTGGSRGIGAAIVRAFVDSGAQVVFCDKDEAGGRALEQELSGTVFIPGDVTQERDLQTLVSETLSRFGHLDCVVNNAGYHPPAQLPEETSAQGFRQLLEVNLLGTYTLIKLALPHLRKSRGNIINISSLVGAIGQSQALTYVATKGAVTAMTKALALDESRHGVRVNCISPGNIWTPLWEELAASTSDPRATILEGTLAQPLGRMGQPAEVAAAAVFLASEATFCTGLELLVTGGAELGYGRKASKSSLGEVPTLPPNVH</sequence>
<protein>
    <recommendedName>
        <fullName>L-fucose dehydrogenase</fullName>
        <ecNumber evidence="1">1.1.1.122</ecNumber>
    </recommendedName>
    <alternativeName>
        <fullName>Hydroxysteroid 17-beta dehydrogenase 14</fullName>
    </alternativeName>
</protein>
<keyword id="KW-0119">Carbohydrate metabolism</keyword>
<keyword id="KW-0963">Cytoplasm</keyword>
<keyword id="KW-0294">Fucose metabolism</keyword>
<keyword id="KW-0443">Lipid metabolism</keyword>
<keyword id="KW-0520">NAD</keyword>
<keyword id="KW-0560">Oxidoreductase</keyword>
<keyword id="KW-1185">Reference proteome</keyword>
<keyword id="KW-0753">Steroid metabolism</keyword>
<comment type="function">
    <text evidence="1">Catalyzes the NAD(+)-dependent oxidation of L-fucose, yielding L-fucono-1,5-lactone, which rapidly converts spontaneously to L-fucone-1,4-lactone. Can also act on D-arabinose and L-galactose, with lower catalytic efficiency. Does not use NADPH. May be the initial enzyme of the putative L-fucose degradation pathway in mammals.</text>
</comment>
<comment type="catalytic activity">
    <reaction evidence="1">
        <text>L-fucose + NAD(+) = L-fucono-1,5-lactone + NADH + H(+)</text>
        <dbReference type="Rhea" id="RHEA:81515"/>
        <dbReference type="ChEBI" id="CHEBI:2181"/>
        <dbReference type="ChEBI" id="CHEBI:15378"/>
        <dbReference type="ChEBI" id="CHEBI:57540"/>
        <dbReference type="ChEBI" id="CHEBI:57945"/>
        <dbReference type="ChEBI" id="CHEBI:81457"/>
        <dbReference type="EC" id="1.1.1.122"/>
    </reaction>
    <physiologicalReaction direction="left-to-right" evidence="1">
        <dbReference type="Rhea" id="RHEA:81516"/>
    </physiologicalReaction>
</comment>
<comment type="catalytic activity">
    <reaction evidence="1">
        <text>D-arabinose + NAD(+) = D-arabinono-1,5-lactone + NADH + H(+)</text>
        <dbReference type="Rhea" id="RHEA:81519"/>
        <dbReference type="ChEBI" id="CHEBI:15378"/>
        <dbReference type="ChEBI" id="CHEBI:46994"/>
        <dbReference type="ChEBI" id="CHEBI:57540"/>
        <dbReference type="ChEBI" id="CHEBI:57945"/>
        <dbReference type="ChEBI" id="CHEBI:194242"/>
        <dbReference type="EC" id="1.1.1.122"/>
    </reaction>
</comment>
<comment type="catalytic activity">
    <reaction evidence="1">
        <text>L-galactose + NAD(+) = L-galactono-1,5-lactone + NADH + H(+)</text>
        <dbReference type="Rhea" id="RHEA:81523"/>
        <dbReference type="ChEBI" id="CHEBI:15378"/>
        <dbReference type="ChEBI" id="CHEBI:37619"/>
        <dbReference type="ChEBI" id="CHEBI:57540"/>
        <dbReference type="ChEBI" id="CHEBI:57945"/>
        <dbReference type="ChEBI" id="CHEBI:182410"/>
        <dbReference type="EC" id="1.1.1.122"/>
    </reaction>
</comment>
<comment type="pathway">
    <text evidence="2">Carbohydrate degradation; L-fucose degradation.</text>
</comment>
<comment type="subunit">
    <text evidence="1">Homotetramer.</text>
</comment>
<comment type="subcellular location">
    <subcellularLocation>
        <location evidence="1">Cytoplasm</location>
    </subcellularLocation>
</comment>
<comment type="similarity">
    <text evidence="4">Belongs to the short-chain dehydrogenases/reductases (SDR) family.</text>
</comment>
<comment type="caution">
    <text evidence="1">Was reported as a 17-beta-hydroxysteroid dehydrogenase that catalyzes estradiol and testosterone oxidation in the C17-hydroxyl group to form estrone and androstenedione, respectively (in vitro). However, HSD17B14 is very inefficient in oxidizing steroids, testosterone, suggesting that steroids cannot be physiological substrates for HSD17B14.</text>
</comment>
<organism>
    <name type="scientific">Mus musculus</name>
    <name type="common">Mouse</name>
    <dbReference type="NCBI Taxonomy" id="10090"/>
    <lineage>
        <taxon>Eukaryota</taxon>
        <taxon>Metazoa</taxon>
        <taxon>Chordata</taxon>
        <taxon>Craniata</taxon>
        <taxon>Vertebrata</taxon>
        <taxon>Euteleostomi</taxon>
        <taxon>Mammalia</taxon>
        <taxon>Eutheria</taxon>
        <taxon>Euarchontoglires</taxon>
        <taxon>Glires</taxon>
        <taxon>Rodentia</taxon>
        <taxon>Myomorpha</taxon>
        <taxon>Muroidea</taxon>
        <taxon>Muridae</taxon>
        <taxon>Murinae</taxon>
        <taxon>Mus</taxon>
        <taxon>Mus</taxon>
    </lineage>
</organism>
<proteinExistence type="inferred from homology"/>
<reference key="1">
    <citation type="journal article" date="2009" name="PLoS Biol.">
        <title>Lineage-specific biology revealed by a finished genome assembly of the mouse.</title>
        <authorList>
            <person name="Church D.M."/>
            <person name="Goodstadt L."/>
            <person name="Hillier L.W."/>
            <person name="Zody M.C."/>
            <person name="Goldstein S."/>
            <person name="She X."/>
            <person name="Bult C.J."/>
            <person name="Agarwala R."/>
            <person name="Cherry J.L."/>
            <person name="DiCuccio M."/>
            <person name="Hlavina W."/>
            <person name="Kapustin Y."/>
            <person name="Meric P."/>
            <person name="Maglott D."/>
            <person name="Birtle Z."/>
            <person name="Marques A.C."/>
            <person name="Graves T."/>
            <person name="Zhou S."/>
            <person name="Teague B."/>
            <person name="Potamousis K."/>
            <person name="Churas C."/>
            <person name="Place M."/>
            <person name="Herschleb J."/>
            <person name="Runnheim R."/>
            <person name="Forrest D."/>
            <person name="Amos-Landgraf J."/>
            <person name="Schwartz D.C."/>
            <person name="Cheng Z."/>
            <person name="Lindblad-Toh K."/>
            <person name="Eichler E.E."/>
            <person name="Ponting C.P."/>
        </authorList>
    </citation>
    <scope>NUCLEOTIDE SEQUENCE [LARGE SCALE GENOMIC DNA]</scope>
    <source>
        <strain>C57BL/6J</strain>
    </source>
</reference>
<dbReference type="EC" id="1.1.1.122" evidence="1"/>
<dbReference type="EMBL" id="AC151602">
    <property type="status" value="NOT_ANNOTATED_CDS"/>
    <property type="molecule type" value="Genomic_DNA"/>
</dbReference>
<dbReference type="RefSeq" id="NP_079606.3">
    <property type="nucleotide sequence ID" value="NM_025330.3"/>
</dbReference>
<dbReference type="SMR" id="E9Q3D4"/>
<dbReference type="FunCoup" id="E9Q3D4">
    <property type="interactions" value="268"/>
</dbReference>
<dbReference type="STRING" id="10090.ENSMUSP00000103381"/>
<dbReference type="PhosphoSitePlus" id="E9Q3D4"/>
<dbReference type="PaxDb" id="10090-ENSMUSP00000103381"/>
<dbReference type="ProteomicsDB" id="348758"/>
<dbReference type="Antibodypedia" id="18422">
    <property type="antibodies" value="139 antibodies from 28 providers"/>
</dbReference>
<dbReference type="DNASU" id="66065"/>
<dbReference type="Ensembl" id="ENSMUST00000107752.12">
    <property type="protein sequence ID" value="ENSMUSP00000103381.4"/>
    <property type="gene ID" value="ENSMUSG00000030825.20"/>
</dbReference>
<dbReference type="GeneID" id="66065"/>
<dbReference type="KEGG" id="mmu:66065"/>
<dbReference type="UCSC" id="uc012fkm.1">
    <property type="organism name" value="mouse"/>
</dbReference>
<dbReference type="AGR" id="MGI:1913315"/>
<dbReference type="CTD" id="51171"/>
<dbReference type="MGI" id="MGI:1913315">
    <property type="gene designation" value="Hsd17b14"/>
</dbReference>
<dbReference type="VEuPathDB" id="HostDB:ENSMUSG00000030825"/>
<dbReference type="eggNOG" id="KOG0725">
    <property type="taxonomic scope" value="Eukaryota"/>
</dbReference>
<dbReference type="GeneTree" id="ENSGT00940000161346"/>
<dbReference type="HOGENOM" id="CLU_010194_1_0_1"/>
<dbReference type="InParanoid" id="E9Q3D4"/>
<dbReference type="OMA" id="AAYQMSQ"/>
<dbReference type="OrthoDB" id="102925at2759"/>
<dbReference type="PhylomeDB" id="E9Q3D4"/>
<dbReference type="TreeFam" id="TF354307"/>
<dbReference type="Reactome" id="R-MMU-193144">
    <property type="pathway name" value="Estrogen biosynthesis"/>
</dbReference>
<dbReference type="UniPathway" id="UPA00563"/>
<dbReference type="BioGRID-ORCS" id="66065">
    <property type="hits" value="0 hits in 78 CRISPR screens"/>
</dbReference>
<dbReference type="ChiTaRS" id="Hsd17b14">
    <property type="organism name" value="mouse"/>
</dbReference>
<dbReference type="Proteomes" id="UP000000589">
    <property type="component" value="Chromosome 7"/>
</dbReference>
<dbReference type="RNAct" id="E9Q3D4">
    <property type="molecule type" value="protein"/>
</dbReference>
<dbReference type="Bgee" id="ENSMUSG00000030825">
    <property type="expression patterns" value="Expressed in blastoderm cell in morula and 62 other cell types or tissues"/>
</dbReference>
<dbReference type="ExpressionAtlas" id="E9Q3D4">
    <property type="expression patterns" value="baseline and differential"/>
</dbReference>
<dbReference type="GO" id="GO:0005829">
    <property type="term" value="C:cytosol"/>
    <property type="evidence" value="ECO:0000250"/>
    <property type="project" value="UniProtKB"/>
</dbReference>
<dbReference type="GO" id="GO:0047834">
    <property type="term" value="F:D-threo-aldose 1-dehydrogenase activity"/>
    <property type="evidence" value="ECO:0000250"/>
    <property type="project" value="UniProtKB"/>
</dbReference>
<dbReference type="GO" id="GO:0042802">
    <property type="term" value="F:identical protein binding"/>
    <property type="evidence" value="ECO:0007669"/>
    <property type="project" value="Ensembl"/>
</dbReference>
<dbReference type="GO" id="GO:0042355">
    <property type="term" value="P:L-fucose catabolic process"/>
    <property type="evidence" value="ECO:0000250"/>
    <property type="project" value="UniProtKB"/>
</dbReference>
<dbReference type="FunFam" id="3.40.50.720:FF:000600">
    <property type="entry name" value="17-beta-hydroxysteroid dehydrogenase 14"/>
    <property type="match status" value="1"/>
</dbReference>
<dbReference type="Gene3D" id="3.40.50.720">
    <property type="entry name" value="NAD(P)-binding Rossmann-like Domain"/>
    <property type="match status" value="1"/>
</dbReference>
<dbReference type="InterPro" id="IPR036291">
    <property type="entry name" value="NAD(P)-bd_dom_sf"/>
</dbReference>
<dbReference type="InterPro" id="IPR020904">
    <property type="entry name" value="Sc_DH/Rdtase_CS"/>
</dbReference>
<dbReference type="InterPro" id="IPR002347">
    <property type="entry name" value="SDR_fam"/>
</dbReference>
<dbReference type="PANTHER" id="PTHR43658:SF8">
    <property type="entry name" value="17-BETA-HYDROXYSTEROID DEHYDROGENASE 14-RELATED"/>
    <property type="match status" value="1"/>
</dbReference>
<dbReference type="PANTHER" id="PTHR43658">
    <property type="entry name" value="SHORT-CHAIN DEHYDROGENASE/REDUCTASE"/>
    <property type="match status" value="1"/>
</dbReference>
<dbReference type="Pfam" id="PF13561">
    <property type="entry name" value="adh_short_C2"/>
    <property type="match status" value="1"/>
</dbReference>
<dbReference type="PRINTS" id="PR00081">
    <property type="entry name" value="GDHRDH"/>
</dbReference>
<dbReference type="PRINTS" id="PR00080">
    <property type="entry name" value="SDRFAMILY"/>
</dbReference>
<dbReference type="SUPFAM" id="SSF51735">
    <property type="entry name" value="NAD(P)-binding Rossmann-fold domains"/>
    <property type="match status" value="1"/>
</dbReference>
<dbReference type="PROSITE" id="PS00061">
    <property type="entry name" value="ADH_SHORT"/>
    <property type="match status" value="1"/>
</dbReference>
<evidence type="ECO:0000250" key="1">
    <source>
        <dbReference type="UniProtKB" id="Q9BPX1"/>
    </source>
</evidence>
<evidence type="ECO:0000250" key="2">
    <source>
        <dbReference type="UniProtKB" id="Q9MYP6"/>
    </source>
</evidence>
<evidence type="ECO:0000255" key="3">
    <source>
        <dbReference type="PROSITE-ProRule" id="PRU10001"/>
    </source>
</evidence>
<evidence type="ECO:0000305" key="4"/>
<evidence type="ECO:0000312" key="5">
    <source>
        <dbReference type="MGI" id="MGI:1913315"/>
    </source>
</evidence>
<accession>E9Q3D4</accession>
<name>DHB14_MOUSE</name>
<feature type="chain" id="PRO_0000461900" description="L-fucose dehydrogenase">
    <location>
        <begin position="1"/>
        <end position="273"/>
    </location>
</feature>
<feature type="active site" description="Proton acceptor" evidence="3">
    <location>
        <position position="154"/>
    </location>
</feature>
<feature type="binding site" evidence="1">
    <location>
        <position position="19"/>
    </location>
    <ligand>
        <name>NAD(+)</name>
        <dbReference type="ChEBI" id="CHEBI:57540"/>
    </ligand>
</feature>
<feature type="binding site" evidence="1">
    <location>
        <position position="21"/>
    </location>
    <ligand>
        <name>NAD(+)</name>
        <dbReference type="ChEBI" id="CHEBI:57540"/>
    </ligand>
</feature>
<feature type="binding site" evidence="1">
    <location>
        <position position="40"/>
    </location>
    <ligand>
        <name>NAD(+)</name>
        <dbReference type="ChEBI" id="CHEBI:57540"/>
    </ligand>
</feature>
<feature type="binding site" evidence="1">
    <location>
        <position position="41"/>
    </location>
    <ligand>
        <name>NAD(+)</name>
        <dbReference type="ChEBI" id="CHEBI:57540"/>
    </ligand>
</feature>
<feature type="binding site" evidence="1">
    <location>
        <position position="62"/>
    </location>
    <ligand>
        <name>NAD(+)</name>
        <dbReference type="ChEBI" id="CHEBI:57540"/>
    </ligand>
</feature>
<feature type="binding site" evidence="1">
    <location>
        <position position="63"/>
    </location>
    <ligand>
        <name>NAD(+)</name>
        <dbReference type="ChEBI" id="CHEBI:57540"/>
    </ligand>
</feature>
<feature type="binding site" evidence="1">
    <location>
        <position position="89"/>
    </location>
    <ligand>
        <name>NAD(+)</name>
        <dbReference type="ChEBI" id="CHEBI:57540"/>
    </ligand>
</feature>
<feature type="binding site" evidence="1">
    <location>
        <position position="154"/>
    </location>
    <ligand>
        <name>NAD(+)</name>
        <dbReference type="ChEBI" id="CHEBI:57540"/>
    </ligand>
</feature>
<feature type="binding site" evidence="1">
    <location>
        <position position="158"/>
    </location>
    <ligand>
        <name>NAD(+)</name>
        <dbReference type="ChEBI" id="CHEBI:57540"/>
    </ligand>
</feature>
<feature type="binding site" evidence="1">
    <location>
        <position position="187"/>
    </location>
    <ligand>
        <name>NAD(+)</name>
        <dbReference type="ChEBI" id="CHEBI:57540"/>
    </ligand>
</feature>
<feature type="binding site" evidence="1">
    <location>
        <position position="189"/>
    </location>
    <ligand>
        <name>NAD(+)</name>
        <dbReference type="ChEBI" id="CHEBI:57540"/>
    </ligand>
</feature>
<feature type="binding site" evidence="1">
    <location>
        <position position="191"/>
    </location>
    <ligand>
        <name>NAD(+)</name>
        <dbReference type="ChEBI" id="CHEBI:57540"/>
    </ligand>
</feature>